<comment type="function">
    <text evidence="1">Part of an energy-coupled inorganic carbon pump.</text>
</comment>
<comment type="cofactor">
    <cofactor evidence="1">
        <name>Zn(2+)</name>
        <dbReference type="ChEBI" id="CHEBI:29105"/>
    </cofactor>
</comment>
<comment type="subunit">
    <text evidence="1">Forms a complex with DabB.</text>
</comment>
<comment type="subcellular location">
    <subcellularLocation>
        <location evidence="1">Cell inner membrane</location>
        <topology evidence="1">Peripheral membrane protein</topology>
    </subcellularLocation>
</comment>
<comment type="similarity">
    <text evidence="1">Belongs to the inorganic carbon transporter (TC 9.A.2) DabA family.</text>
</comment>
<keyword id="KW-0997">Cell inner membrane</keyword>
<keyword id="KW-1003">Cell membrane</keyword>
<keyword id="KW-0472">Membrane</keyword>
<keyword id="KW-0479">Metal-binding</keyword>
<keyword id="KW-1185">Reference proteome</keyword>
<keyword id="KW-0813">Transport</keyword>
<keyword id="KW-0862">Zinc</keyword>
<dbReference type="EMBL" id="CP000870">
    <property type="protein sequence ID" value="ABX19513.1"/>
    <property type="molecule type" value="Genomic_DNA"/>
</dbReference>
<dbReference type="EMBL" id="AP009387">
    <property type="protein sequence ID" value="BAG47496.1"/>
    <property type="molecule type" value="Genomic_DNA"/>
</dbReference>
<dbReference type="RefSeq" id="WP_012218207.1">
    <property type="nucleotide sequence ID" value="NC_010801.1"/>
</dbReference>
<dbReference type="STRING" id="395019.BMULJ_05674"/>
<dbReference type="KEGG" id="bmj:BMULJ_05674"/>
<dbReference type="KEGG" id="bmu:Bmul_5850"/>
<dbReference type="eggNOG" id="COG3002">
    <property type="taxonomic scope" value="Bacteria"/>
</dbReference>
<dbReference type="HOGENOM" id="CLU_009885_1_0_4"/>
<dbReference type="Proteomes" id="UP000008815">
    <property type="component" value="Chromosome 3"/>
</dbReference>
<dbReference type="GO" id="GO:0005886">
    <property type="term" value="C:plasma membrane"/>
    <property type="evidence" value="ECO:0007669"/>
    <property type="project" value="UniProtKB-SubCell"/>
</dbReference>
<dbReference type="GO" id="GO:0008270">
    <property type="term" value="F:zinc ion binding"/>
    <property type="evidence" value="ECO:0007669"/>
    <property type="project" value="UniProtKB-UniRule"/>
</dbReference>
<dbReference type="HAMAP" id="MF_01871">
    <property type="entry name" value="DabA"/>
    <property type="match status" value="1"/>
</dbReference>
<dbReference type="InterPro" id="IPR018752">
    <property type="entry name" value="DabA"/>
</dbReference>
<dbReference type="PANTHER" id="PTHR38344:SF1">
    <property type="entry name" value="INORGANIC CARBON TRANSPORTER SUBUNIT DABA-RELATED"/>
    <property type="match status" value="1"/>
</dbReference>
<dbReference type="PANTHER" id="PTHR38344">
    <property type="entry name" value="UPF0753 PROTEIN AQ_863"/>
    <property type="match status" value="1"/>
</dbReference>
<dbReference type="Pfam" id="PF10070">
    <property type="entry name" value="DabA"/>
    <property type="match status" value="1"/>
</dbReference>
<protein>
    <recommendedName>
        <fullName evidence="1">Probable inorganic carbon transporter subunit DabA</fullName>
    </recommendedName>
</protein>
<accession>A9ASJ1</accession>
<name>DABA_BURM1</name>
<feature type="chain" id="PRO_0000387255" description="Probable inorganic carbon transporter subunit DabA">
    <location>
        <begin position="1"/>
        <end position="869"/>
    </location>
</feature>
<feature type="region of interest" description="Disordered" evidence="2">
    <location>
        <begin position="1"/>
        <end position="32"/>
    </location>
</feature>
<feature type="compositionally biased region" description="Basic and acidic residues" evidence="2">
    <location>
        <begin position="8"/>
        <end position="17"/>
    </location>
</feature>
<feature type="binding site" evidence="1">
    <location>
        <position position="376"/>
    </location>
    <ligand>
        <name>Zn(2+)</name>
        <dbReference type="ChEBI" id="CHEBI:29105"/>
    </ligand>
</feature>
<feature type="binding site" evidence="1">
    <location>
        <position position="378"/>
    </location>
    <ligand>
        <name>Zn(2+)</name>
        <dbReference type="ChEBI" id="CHEBI:29105"/>
    </ligand>
</feature>
<feature type="binding site" evidence="1">
    <location>
        <position position="555"/>
    </location>
    <ligand>
        <name>Zn(2+)</name>
        <dbReference type="ChEBI" id="CHEBI:29105"/>
    </ligand>
</feature>
<feature type="binding site" evidence="1">
    <location>
        <position position="570"/>
    </location>
    <ligand>
        <name>Zn(2+)</name>
        <dbReference type="ChEBI" id="CHEBI:29105"/>
    </ligand>
</feature>
<gene>
    <name evidence="1" type="primary">dabA</name>
    <name type="ordered locus">Bmul_5850</name>
    <name type="ordered locus">BMULJ_05674</name>
</gene>
<reference key="1">
    <citation type="submission" date="2007-10" db="EMBL/GenBank/DDBJ databases">
        <title>Complete sequence of chromosome 3 of Burkholderia multivorans ATCC 17616.</title>
        <authorList>
            <person name="Copeland A."/>
            <person name="Lucas S."/>
            <person name="Lapidus A."/>
            <person name="Barry K."/>
            <person name="Glavina del Rio T."/>
            <person name="Dalin E."/>
            <person name="Tice H."/>
            <person name="Pitluck S."/>
            <person name="Chain P."/>
            <person name="Malfatti S."/>
            <person name="Shin M."/>
            <person name="Vergez L."/>
            <person name="Schmutz J."/>
            <person name="Larimer F."/>
            <person name="Land M."/>
            <person name="Hauser L."/>
            <person name="Kyrpides N."/>
            <person name="Kim E."/>
            <person name="Tiedje J."/>
            <person name="Richardson P."/>
        </authorList>
    </citation>
    <scope>NUCLEOTIDE SEQUENCE [LARGE SCALE GENOMIC DNA]</scope>
    <source>
        <strain>ATCC 17616 / 249</strain>
    </source>
</reference>
<reference key="2">
    <citation type="submission" date="2007-04" db="EMBL/GenBank/DDBJ databases">
        <title>Complete genome sequence of Burkholderia multivorans ATCC 17616.</title>
        <authorList>
            <person name="Ohtsubo Y."/>
            <person name="Yamashita A."/>
            <person name="Kurokawa K."/>
            <person name="Takami H."/>
            <person name="Yuhara S."/>
            <person name="Nishiyama E."/>
            <person name="Endo R."/>
            <person name="Miyazaki R."/>
            <person name="Ono A."/>
            <person name="Yano K."/>
            <person name="Ito M."/>
            <person name="Sota M."/>
            <person name="Yuji N."/>
            <person name="Hattori M."/>
            <person name="Tsuda M."/>
        </authorList>
    </citation>
    <scope>NUCLEOTIDE SEQUENCE [LARGE SCALE GENOMIC DNA]</scope>
    <source>
        <strain>ATCC 17616 / 249</strain>
    </source>
</reference>
<proteinExistence type="inferred from homology"/>
<sequence length="869" mass="94861">MSTATLEQRAKRGEAPRANDAGHCAHPADGARRGYPRERIDAACDAACRSIAPAWPLDRAIAVNPHWERIGRPVREIAARMAVLADIKVFPPREQIRSAWESARIAPADLRYALQALPAAQAAGMTERNCIDALARPLNLPRLPLLIDVLDDDPLRHERLSWRQAITHQVSQTCAAYFDEHQADWRPHHDQSLYAFWRDTISHDHGIGVLMGLPRLGQSLRALPATRQEAEAWVLERLGLPEAVWPDYLEAVLLTVNGWASWCAYLGWQARLAGESDEHLRDLLAIRLAWGVLLLDCKDDAAARRAFAAVQGHWRDSAALLADAQARLLVDEVWQLAFEAGYQRELAGKLGAVGQPQTIPEAATPAEEIEVQAAFCIDVRSEPLRRAVESIWPAVQTIGFAGFFGLPVAYTPLATSARRPQLPGLLAPSLEVTDAVSGPAGEGGGTMRAAASTARRTRFALSNQASAATRLPGTSFSFVEAAGLGYLGKLRQWLKPSRNPRVRDDLAGLPPRYKAVCRPALVGIDDQAKADLAARILHGMGIARSLAPLVVLVGHASQSANNAHAAALDCGACCGQSGEVNVRVLAQLLNDRATRAGLAQRGIDVPDDTTFVAALHNTTTDEIEGFDVDLLNPIAAARWAKLLSVFGHASDQVRRERAVRVGLDPRMEGGRLLASLRERANDGAQTRPEWGLAGNAAFVIGPRTRSHGAVLDGRCFLHDYDFTQDTDGSLLELLMTAPMLVAHWINWQYHASTCDPAHMGCGNKVLHNVVGGHIGVFEGNSGDLRIGLSKQSLHDGQRWMHEPLRLTVIIDAPGASIERVIDRHPTVRHLIDHGWLHLWRFGETGLLRFSDRQWHPLAMGADPATRQSP</sequence>
<evidence type="ECO:0000255" key="1">
    <source>
        <dbReference type="HAMAP-Rule" id="MF_01871"/>
    </source>
</evidence>
<evidence type="ECO:0000256" key="2">
    <source>
        <dbReference type="SAM" id="MobiDB-lite"/>
    </source>
</evidence>
<organism>
    <name type="scientific">Burkholderia multivorans (strain ATCC 17616 / 249)</name>
    <dbReference type="NCBI Taxonomy" id="395019"/>
    <lineage>
        <taxon>Bacteria</taxon>
        <taxon>Pseudomonadati</taxon>
        <taxon>Pseudomonadota</taxon>
        <taxon>Betaproteobacteria</taxon>
        <taxon>Burkholderiales</taxon>
        <taxon>Burkholderiaceae</taxon>
        <taxon>Burkholderia</taxon>
        <taxon>Burkholderia cepacia complex</taxon>
    </lineage>
</organism>